<feature type="chain" id="PRO_1000080130" description="Homoserine kinase">
    <location>
        <begin position="1"/>
        <end position="304"/>
    </location>
</feature>
<feature type="binding site" evidence="1">
    <location>
        <begin position="90"/>
        <end position="100"/>
    </location>
    <ligand>
        <name>ATP</name>
        <dbReference type="ChEBI" id="CHEBI:30616"/>
    </ligand>
</feature>
<evidence type="ECO:0000255" key="1">
    <source>
        <dbReference type="HAMAP-Rule" id="MF_00384"/>
    </source>
</evidence>
<reference key="1">
    <citation type="submission" date="2007-05" db="EMBL/GenBank/DDBJ databases">
        <title>Complete sequence of chromosome of Staphylococcus aureus subsp. aureus JH9.</title>
        <authorList>
            <consortium name="US DOE Joint Genome Institute"/>
            <person name="Copeland A."/>
            <person name="Lucas S."/>
            <person name="Lapidus A."/>
            <person name="Barry K."/>
            <person name="Detter J.C."/>
            <person name="Glavina del Rio T."/>
            <person name="Hammon N."/>
            <person name="Israni S."/>
            <person name="Pitluck S."/>
            <person name="Chain P."/>
            <person name="Malfatti S."/>
            <person name="Shin M."/>
            <person name="Vergez L."/>
            <person name="Schmutz J."/>
            <person name="Larimer F."/>
            <person name="Land M."/>
            <person name="Hauser L."/>
            <person name="Kyrpides N."/>
            <person name="Kim E."/>
            <person name="Tomasz A."/>
            <person name="Richardson P."/>
        </authorList>
    </citation>
    <scope>NUCLEOTIDE SEQUENCE [LARGE SCALE GENOMIC DNA]</scope>
    <source>
        <strain>JH9</strain>
    </source>
</reference>
<protein>
    <recommendedName>
        <fullName evidence="1">Homoserine kinase</fullName>
        <shortName evidence="1">HK</shortName>
        <shortName evidence="1">HSK</shortName>
        <ecNumber evidence="1">2.7.1.39</ecNumber>
    </recommendedName>
</protein>
<dbReference type="EC" id="2.7.1.39" evidence="1"/>
<dbReference type="EMBL" id="CP000703">
    <property type="protein sequence ID" value="ABQ49185.1"/>
    <property type="molecule type" value="Genomic_DNA"/>
</dbReference>
<dbReference type="RefSeq" id="WP_000073180.1">
    <property type="nucleotide sequence ID" value="NC_009487.1"/>
</dbReference>
<dbReference type="SMR" id="A5ISL2"/>
<dbReference type="KEGG" id="saj:SaurJH9_1391"/>
<dbReference type="HOGENOM" id="CLU_041243_0_0_9"/>
<dbReference type="UniPathway" id="UPA00050">
    <property type="reaction ID" value="UER00064"/>
</dbReference>
<dbReference type="GO" id="GO:0005737">
    <property type="term" value="C:cytoplasm"/>
    <property type="evidence" value="ECO:0007669"/>
    <property type="project" value="UniProtKB-SubCell"/>
</dbReference>
<dbReference type="GO" id="GO:0005524">
    <property type="term" value="F:ATP binding"/>
    <property type="evidence" value="ECO:0007669"/>
    <property type="project" value="UniProtKB-UniRule"/>
</dbReference>
<dbReference type="GO" id="GO:0004413">
    <property type="term" value="F:homoserine kinase activity"/>
    <property type="evidence" value="ECO:0007669"/>
    <property type="project" value="UniProtKB-UniRule"/>
</dbReference>
<dbReference type="GO" id="GO:0009088">
    <property type="term" value="P:threonine biosynthetic process"/>
    <property type="evidence" value="ECO:0007669"/>
    <property type="project" value="UniProtKB-UniRule"/>
</dbReference>
<dbReference type="Gene3D" id="3.30.230.10">
    <property type="match status" value="1"/>
</dbReference>
<dbReference type="Gene3D" id="3.30.70.890">
    <property type="entry name" value="GHMP kinase, C-terminal domain"/>
    <property type="match status" value="1"/>
</dbReference>
<dbReference type="HAMAP" id="MF_00384">
    <property type="entry name" value="Homoser_kinase"/>
    <property type="match status" value="1"/>
</dbReference>
<dbReference type="InterPro" id="IPR013750">
    <property type="entry name" value="GHMP_kinase_C_dom"/>
</dbReference>
<dbReference type="InterPro" id="IPR036554">
    <property type="entry name" value="GHMP_kinase_C_sf"/>
</dbReference>
<dbReference type="InterPro" id="IPR006204">
    <property type="entry name" value="GHMP_kinase_N_dom"/>
</dbReference>
<dbReference type="InterPro" id="IPR006203">
    <property type="entry name" value="GHMP_knse_ATP-bd_CS"/>
</dbReference>
<dbReference type="InterPro" id="IPR000870">
    <property type="entry name" value="Homoserine_kinase"/>
</dbReference>
<dbReference type="InterPro" id="IPR020568">
    <property type="entry name" value="Ribosomal_Su5_D2-typ_SF"/>
</dbReference>
<dbReference type="InterPro" id="IPR014721">
    <property type="entry name" value="Ribsml_uS5_D2-typ_fold_subgr"/>
</dbReference>
<dbReference type="NCBIfam" id="TIGR00191">
    <property type="entry name" value="thrB"/>
    <property type="match status" value="1"/>
</dbReference>
<dbReference type="PANTHER" id="PTHR20861:SF1">
    <property type="entry name" value="HOMOSERINE KINASE"/>
    <property type="match status" value="1"/>
</dbReference>
<dbReference type="PANTHER" id="PTHR20861">
    <property type="entry name" value="HOMOSERINE/4-DIPHOSPHOCYTIDYL-2-C-METHYL-D-ERYTHRITOL KINASE"/>
    <property type="match status" value="1"/>
</dbReference>
<dbReference type="Pfam" id="PF08544">
    <property type="entry name" value="GHMP_kinases_C"/>
    <property type="match status" value="1"/>
</dbReference>
<dbReference type="Pfam" id="PF00288">
    <property type="entry name" value="GHMP_kinases_N"/>
    <property type="match status" value="1"/>
</dbReference>
<dbReference type="PIRSF" id="PIRSF000676">
    <property type="entry name" value="Homoser_kin"/>
    <property type="match status" value="1"/>
</dbReference>
<dbReference type="PRINTS" id="PR00958">
    <property type="entry name" value="HOMSERKINASE"/>
</dbReference>
<dbReference type="SUPFAM" id="SSF55060">
    <property type="entry name" value="GHMP Kinase, C-terminal domain"/>
    <property type="match status" value="1"/>
</dbReference>
<dbReference type="SUPFAM" id="SSF54211">
    <property type="entry name" value="Ribosomal protein S5 domain 2-like"/>
    <property type="match status" value="1"/>
</dbReference>
<dbReference type="PROSITE" id="PS00627">
    <property type="entry name" value="GHMP_KINASES_ATP"/>
    <property type="match status" value="1"/>
</dbReference>
<gene>
    <name evidence="1" type="primary">thrB</name>
    <name type="ordered locus">SaurJH9_1391</name>
</gene>
<keyword id="KW-0028">Amino-acid biosynthesis</keyword>
<keyword id="KW-0067">ATP-binding</keyword>
<keyword id="KW-0963">Cytoplasm</keyword>
<keyword id="KW-0418">Kinase</keyword>
<keyword id="KW-0547">Nucleotide-binding</keyword>
<keyword id="KW-0791">Threonine biosynthesis</keyword>
<keyword id="KW-0808">Transferase</keyword>
<accession>A5ISL2</accession>
<comment type="function">
    <text evidence="1">Catalyzes the ATP-dependent phosphorylation of L-homoserine to L-homoserine phosphate.</text>
</comment>
<comment type="catalytic activity">
    <reaction evidence="1">
        <text>L-homoserine + ATP = O-phospho-L-homoserine + ADP + H(+)</text>
        <dbReference type="Rhea" id="RHEA:13985"/>
        <dbReference type="ChEBI" id="CHEBI:15378"/>
        <dbReference type="ChEBI" id="CHEBI:30616"/>
        <dbReference type="ChEBI" id="CHEBI:57476"/>
        <dbReference type="ChEBI" id="CHEBI:57590"/>
        <dbReference type="ChEBI" id="CHEBI:456216"/>
        <dbReference type="EC" id="2.7.1.39"/>
    </reaction>
</comment>
<comment type="pathway">
    <text evidence="1">Amino-acid biosynthesis; L-threonine biosynthesis; L-threonine from L-aspartate: step 4/5.</text>
</comment>
<comment type="subcellular location">
    <subcellularLocation>
        <location evidence="1">Cytoplasm</location>
    </subcellularLocation>
</comment>
<comment type="similarity">
    <text evidence="1">Belongs to the GHMP kinase family. Homoserine kinase subfamily.</text>
</comment>
<sequence length="304" mass="33250">MSNVLELTIPASTANLGVGFDSIGMALDKFLHLSVKETSGTKWEYIFHDDASKQLPTDETNFIYHVAQQVASKYSVDLPILCIEMRSDIPLARGLGSSASALVGAIYIANYFGDIQLSKHEVLQLATEIEGHPDNVAPTIYGGLIAGFYNDVSKETSVAHIDIPDVDVIVTIPTYELKTEASRRALPQKLTHSEAVKSSAISNTMICALAQHNYELAGKLMQQDGFHEPYRQHLIAEFDEVKTIASQHNAYATVISGAGPTILIFSRKENSGELVRSLNSQVVSCHSELVDINISGVKERIVYQ</sequence>
<organism>
    <name type="scientific">Staphylococcus aureus (strain JH9)</name>
    <dbReference type="NCBI Taxonomy" id="359786"/>
    <lineage>
        <taxon>Bacteria</taxon>
        <taxon>Bacillati</taxon>
        <taxon>Bacillota</taxon>
        <taxon>Bacilli</taxon>
        <taxon>Bacillales</taxon>
        <taxon>Staphylococcaceae</taxon>
        <taxon>Staphylococcus</taxon>
    </lineage>
</organism>
<proteinExistence type="inferred from homology"/>
<name>KHSE_STAA9</name>